<keyword id="KW-0002">3D-structure</keyword>
<keyword id="KW-1185">Reference proteome</keyword>
<protein>
    <recommendedName>
        <fullName>Uncharacterized protein YflH</fullName>
    </recommendedName>
</protein>
<evidence type="ECO:0007829" key="1">
    <source>
        <dbReference type="PDB" id="3D0W"/>
    </source>
</evidence>
<sequence length="104" mass="12023">MNRDQEKIQIENEMNAMHGTIKEDILKDFEEFKGYLKKQVNRGKKLGLDDGKLVKSAAILGDYLAKHEEPQNGEEMLLQELWSVADEDEKEHLAQLLVKLVDKQ</sequence>
<proteinExistence type="evidence at protein level"/>
<accession>O34306</accession>
<accession>Q79ET7</accession>
<gene>
    <name type="primary">yflH</name>
    <name type="ordered locus">BSU07680</name>
</gene>
<reference key="1">
    <citation type="journal article" date="1997" name="Gene">
        <title>Cloning and sequencing of a 35.7 kb in the 70 degree-73 degree region of the Bacillus subtilis genome reveal genes for a new two-component system, three spore germination proteins, an iron uptake system and a general stress response protein.</title>
        <authorList>
            <person name="Yamamoto H."/>
            <person name="Uchiyama S."/>
            <person name="Nugroho F.A."/>
            <person name="Sekiguchi J."/>
        </authorList>
    </citation>
    <scope>NUCLEOTIDE SEQUENCE [GENOMIC DNA]</scope>
    <source>
        <strain>168 / AC327</strain>
    </source>
</reference>
<reference key="2">
    <citation type="journal article" date="1997" name="Nature">
        <title>The complete genome sequence of the Gram-positive bacterium Bacillus subtilis.</title>
        <authorList>
            <person name="Kunst F."/>
            <person name="Ogasawara N."/>
            <person name="Moszer I."/>
            <person name="Albertini A.M."/>
            <person name="Alloni G."/>
            <person name="Azevedo V."/>
            <person name="Bertero M.G."/>
            <person name="Bessieres P."/>
            <person name="Bolotin A."/>
            <person name="Borchert S."/>
            <person name="Borriss R."/>
            <person name="Boursier L."/>
            <person name="Brans A."/>
            <person name="Braun M."/>
            <person name="Brignell S.C."/>
            <person name="Bron S."/>
            <person name="Brouillet S."/>
            <person name="Bruschi C.V."/>
            <person name="Caldwell B."/>
            <person name="Capuano V."/>
            <person name="Carter N.M."/>
            <person name="Choi S.-K."/>
            <person name="Codani J.-J."/>
            <person name="Connerton I.F."/>
            <person name="Cummings N.J."/>
            <person name="Daniel R.A."/>
            <person name="Denizot F."/>
            <person name="Devine K.M."/>
            <person name="Duesterhoeft A."/>
            <person name="Ehrlich S.D."/>
            <person name="Emmerson P.T."/>
            <person name="Entian K.-D."/>
            <person name="Errington J."/>
            <person name="Fabret C."/>
            <person name="Ferrari E."/>
            <person name="Foulger D."/>
            <person name="Fritz C."/>
            <person name="Fujita M."/>
            <person name="Fujita Y."/>
            <person name="Fuma S."/>
            <person name="Galizzi A."/>
            <person name="Galleron N."/>
            <person name="Ghim S.-Y."/>
            <person name="Glaser P."/>
            <person name="Goffeau A."/>
            <person name="Golightly E.J."/>
            <person name="Grandi G."/>
            <person name="Guiseppi G."/>
            <person name="Guy B.J."/>
            <person name="Haga K."/>
            <person name="Haiech J."/>
            <person name="Harwood C.R."/>
            <person name="Henaut A."/>
            <person name="Hilbert H."/>
            <person name="Holsappel S."/>
            <person name="Hosono S."/>
            <person name="Hullo M.-F."/>
            <person name="Itaya M."/>
            <person name="Jones L.-M."/>
            <person name="Joris B."/>
            <person name="Karamata D."/>
            <person name="Kasahara Y."/>
            <person name="Klaerr-Blanchard M."/>
            <person name="Klein C."/>
            <person name="Kobayashi Y."/>
            <person name="Koetter P."/>
            <person name="Koningstein G."/>
            <person name="Krogh S."/>
            <person name="Kumano M."/>
            <person name="Kurita K."/>
            <person name="Lapidus A."/>
            <person name="Lardinois S."/>
            <person name="Lauber J."/>
            <person name="Lazarevic V."/>
            <person name="Lee S.-M."/>
            <person name="Levine A."/>
            <person name="Liu H."/>
            <person name="Masuda S."/>
            <person name="Mauel C."/>
            <person name="Medigue C."/>
            <person name="Medina N."/>
            <person name="Mellado R.P."/>
            <person name="Mizuno M."/>
            <person name="Moestl D."/>
            <person name="Nakai S."/>
            <person name="Noback M."/>
            <person name="Noone D."/>
            <person name="O'Reilly M."/>
            <person name="Ogawa K."/>
            <person name="Ogiwara A."/>
            <person name="Oudega B."/>
            <person name="Park S.-H."/>
            <person name="Parro V."/>
            <person name="Pohl T.M."/>
            <person name="Portetelle D."/>
            <person name="Porwollik S."/>
            <person name="Prescott A.M."/>
            <person name="Presecan E."/>
            <person name="Pujic P."/>
            <person name="Purnelle B."/>
            <person name="Rapoport G."/>
            <person name="Rey M."/>
            <person name="Reynolds S."/>
            <person name="Rieger M."/>
            <person name="Rivolta C."/>
            <person name="Rocha E."/>
            <person name="Roche B."/>
            <person name="Rose M."/>
            <person name="Sadaie Y."/>
            <person name="Sato T."/>
            <person name="Scanlan E."/>
            <person name="Schleich S."/>
            <person name="Schroeter R."/>
            <person name="Scoffone F."/>
            <person name="Sekiguchi J."/>
            <person name="Sekowska A."/>
            <person name="Seror S.J."/>
            <person name="Serror P."/>
            <person name="Shin B.-S."/>
            <person name="Soldo B."/>
            <person name="Sorokin A."/>
            <person name="Tacconi E."/>
            <person name="Takagi T."/>
            <person name="Takahashi H."/>
            <person name="Takemaru K."/>
            <person name="Takeuchi M."/>
            <person name="Tamakoshi A."/>
            <person name="Tanaka T."/>
            <person name="Terpstra P."/>
            <person name="Tognoni A."/>
            <person name="Tosato V."/>
            <person name="Uchiyama S."/>
            <person name="Vandenbol M."/>
            <person name="Vannier F."/>
            <person name="Vassarotti A."/>
            <person name="Viari A."/>
            <person name="Wambutt R."/>
            <person name="Wedler E."/>
            <person name="Wedler H."/>
            <person name="Weitzenegger T."/>
            <person name="Winters P."/>
            <person name="Wipat A."/>
            <person name="Yamamoto H."/>
            <person name="Yamane K."/>
            <person name="Yasumoto K."/>
            <person name="Yata K."/>
            <person name="Yoshida K."/>
            <person name="Yoshikawa H.-F."/>
            <person name="Zumstein E."/>
            <person name="Yoshikawa H."/>
            <person name="Danchin A."/>
        </authorList>
    </citation>
    <scope>NUCLEOTIDE SEQUENCE [LARGE SCALE GENOMIC DNA]</scope>
    <source>
        <strain>168</strain>
    </source>
</reference>
<dbReference type="EMBL" id="D86417">
    <property type="protein sequence ID" value="BAA22301.1"/>
    <property type="molecule type" value="Genomic_DNA"/>
</dbReference>
<dbReference type="EMBL" id="AL009126">
    <property type="protein sequence ID" value="CAB12597.1"/>
    <property type="molecule type" value="Genomic_DNA"/>
</dbReference>
<dbReference type="PIR" id="F69810">
    <property type="entry name" value="F69810"/>
</dbReference>
<dbReference type="RefSeq" id="NP_388649.1">
    <property type="nucleotide sequence ID" value="NC_000964.3"/>
</dbReference>
<dbReference type="RefSeq" id="WP_003242951.1">
    <property type="nucleotide sequence ID" value="NZ_OZ025638.1"/>
</dbReference>
<dbReference type="PDB" id="3D0W">
    <property type="method" value="X-ray"/>
    <property type="resolution" value="2.00 A"/>
    <property type="chains" value="A/B/C/D=1-104"/>
</dbReference>
<dbReference type="PDBsum" id="3D0W"/>
<dbReference type="SMR" id="O34306"/>
<dbReference type="FunCoup" id="O34306">
    <property type="interactions" value="19"/>
</dbReference>
<dbReference type="STRING" id="224308.BSU07680"/>
<dbReference type="PaxDb" id="224308-BSU07680"/>
<dbReference type="EnsemblBacteria" id="CAB12597">
    <property type="protein sequence ID" value="CAB12597"/>
    <property type="gene ID" value="BSU_07680"/>
</dbReference>
<dbReference type="GeneID" id="936129"/>
<dbReference type="KEGG" id="bsu:BSU07680"/>
<dbReference type="PATRIC" id="fig|224308.179.peg.834"/>
<dbReference type="eggNOG" id="ENOG5032TWU">
    <property type="taxonomic scope" value="Bacteria"/>
</dbReference>
<dbReference type="InParanoid" id="O34306"/>
<dbReference type="OrthoDB" id="2418090at2"/>
<dbReference type="PhylomeDB" id="O34306"/>
<dbReference type="BioCyc" id="BSUB:BSU07680-MONOMER"/>
<dbReference type="EvolutionaryTrace" id="O34306"/>
<dbReference type="Proteomes" id="UP000001570">
    <property type="component" value="Chromosome"/>
</dbReference>
<dbReference type="Gene3D" id="1.10.760.20">
    <property type="entry name" value="Protein of unknown function DUF3243"/>
    <property type="match status" value="1"/>
</dbReference>
<dbReference type="InterPro" id="IPR021637">
    <property type="entry name" value="DUF3243"/>
</dbReference>
<dbReference type="InterPro" id="IPR038292">
    <property type="entry name" value="YmfJ/YflH_sf"/>
</dbReference>
<dbReference type="Pfam" id="PF11588">
    <property type="entry name" value="DUF3243"/>
    <property type="match status" value="1"/>
</dbReference>
<organism>
    <name type="scientific">Bacillus subtilis (strain 168)</name>
    <dbReference type="NCBI Taxonomy" id="224308"/>
    <lineage>
        <taxon>Bacteria</taxon>
        <taxon>Bacillati</taxon>
        <taxon>Bacillota</taxon>
        <taxon>Bacilli</taxon>
        <taxon>Bacillales</taxon>
        <taxon>Bacillaceae</taxon>
        <taxon>Bacillus</taxon>
    </lineage>
</organism>
<name>YFLH_BACSU</name>
<feature type="chain" id="PRO_0000378465" description="Uncharacterized protein YflH">
    <location>
        <begin position="1"/>
        <end position="104"/>
    </location>
</feature>
<feature type="helix" evidence="1">
    <location>
        <begin position="23"/>
        <end position="48"/>
    </location>
</feature>
<feature type="turn" evidence="1">
    <location>
        <begin position="49"/>
        <end position="51"/>
    </location>
</feature>
<feature type="helix" evidence="1">
    <location>
        <begin position="56"/>
        <end position="65"/>
    </location>
</feature>
<feature type="helix" evidence="1">
    <location>
        <begin position="73"/>
        <end position="84"/>
    </location>
</feature>
<feature type="helix" evidence="1">
    <location>
        <begin position="87"/>
        <end position="101"/>
    </location>
</feature>